<feature type="chain" id="PRO_1000148269" description="Phosphoribosylformylglycinamidine cyclo-ligase">
    <location>
        <begin position="1"/>
        <end position="345"/>
    </location>
</feature>
<name>PUR5_BIFLS</name>
<comment type="catalytic activity">
    <reaction evidence="1">
        <text>2-formamido-N(1)-(5-O-phospho-beta-D-ribosyl)acetamidine + ATP = 5-amino-1-(5-phospho-beta-D-ribosyl)imidazole + ADP + phosphate + H(+)</text>
        <dbReference type="Rhea" id="RHEA:23032"/>
        <dbReference type="ChEBI" id="CHEBI:15378"/>
        <dbReference type="ChEBI" id="CHEBI:30616"/>
        <dbReference type="ChEBI" id="CHEBI:43474"/>
        <dbReference type="ChEBI" id="CHEBI:137981"/>
        <dbReference type="ChEBI" id="CHEBI:147287"/>
        <dbReference type="ChEBI" id="CHEBI:456216"/>
        <dbReference type="EC" id="6.3.3.1"/>
    </reaction>
</comment>
<comment type="pathway">
    <text evidence="1">Purine metabolism; IMP biosynthesis via de novo pathway; 5-amino-1-(5-phospho-D-ribosyl)imidazole from N(2)-formyl-N(1)-(5-phospho-D-ribosyl)glycinamide: step 2/2.</text>
</comment>
<comment type="subcellular location">
    <subcellularLocation>
        <location evidence="1">Cytoplasm</location>
    </subcellularLocation>
</comment>
<comment type="similarity">
    <text evidence="1">Belongs to the AIR synthase family.</text>
</comment>
<sequence length="345" mass="36083">MPKAYENAGVSVEAGYEVVKRIKSHVARTNRPGVVGGIGGFGGLFDLASLGYKEPVLISGTDGVGTKLMVAKLANKHNTIGIDCVAMCVNDIAAQGAEPLFFLDYIACGKNDPALLEQVVAGVADGCVQAGSALVGGETAEMPGMYDEDEYDLAGFSIGVAEKSAIVDGSTIVEGDVLIGLPSTGVHSNGFSLVRKALFEQAGYTVDTKLDELGGEKLGDVLLTPTKIYVKALSPLFKAGVVKGVAHITGGGFIENIPRMIPDGLAAEIELGTWPVLPIFDVLEKAGNIDHKEMYNIFNMGIGMVLAIDPARKDEALKLLADNNEPAYVLGQITADTTGTQIVLK</sequence>
<dbReference type="EC" id="6.3.3.1" evidence="1"/>
<dbReference type="EMBL" id="CP001095">
    <property type="protein sequence ID" value="ACJ53027.1"/>
    <property type="molecule type" value="Genomic_DNA"/>
</dbReference>
<dbReference type="EMBL" id="AP010889">
    <property type="protein sequence ID" value="BAJ69609.1"/>
    <property type="molecule type" value="Genomic_DNA"/>
</dbReference>
<dbReference type="RefSeq" id="WP_012578234.1">
    <property type="nucleotide sequence ID" value="NC_011593.1"/>
</dbReference>
<dbReference type="SMR" id="B7GU81"/>
<dbReference type="KEGG" id="bln:Blon_1959"/>
<dbReference type="KEGG" id="blon:BLIJ_2031"/>
<dbReference type="PATRIC" id="fig|391904.8.peg.2037"/>
<dbReference type="HOGENOM" id="CLU_047116_0_0_11"/>
<dbReference type="UniPathway" id="UPA00074">
    <property type="reaction ID" value="UER00129"/>
</dbReference>
<dbReference type="Proteomes" id="UP000001360">
    <property type="component" value="Chromosome"/>
</dbReference>
<dbReference type="GO" id="GO:0005829">
    <property type="term" value="C:cytosol"/>
    <property type="evidence" value="ECO:0007669"/>
    <property type="project" value="TreeGrafter"/>
</dbReference>
<dbReference type="GO" id="GO:0005524">
    <property type="term" value="F:ATP binding"/>
    <property type="evidence" value="ECO:0007669"/>
    <property type="project" value="UniProtKB-KW"/>
</dbReference>
<dbReference type="GO" id="GO:0004637">
    <property type="term" value="F:phosphoribosylamine-glycine ligase activity"/>
    <property type="evidence" value="ECO:0007669"/>
    <property type="project" value="TreeGrafter"/>
</dbReference>
<dbReference type="GO" id="GO:0004641">
    <property type="term" value="F:phosphoribosylformylglycinamidine cyclo-ligase activity"/>
    <property type="evidence" value="ECO:0007669"/>
    <property type="project" value="UniProtKB-UniRule"/>
</dbReference>
<dbReference type="GO" id="GO:0006189">
    <property type="term" value="P:'de novo' IMP biosynthetic process"/>
    <property type="evidence" value="ECO:0007669"/>
    <property type="project" value="UniProtKB-UniRule"/>
</dbReference>
<dbReference type="GO" id="GO:0046084">
    <property type="term" value="P:adenine biosynthetic process"/>
    <property type="evidence" value="ECO:0007669"/>
    <property type="project" value="TreeGrafter"/>
</dbReference>
<dbReference type="CDD" id="cd02196">
    <property type="entry name" value="PurM"/>
    <property type="match status" value="1"/>
</dbReference>
<dbReference type="FunFam" id="3.30.1330.10:FF:000001">
    <property type="entry name" value="Phosphoribosylformylglycinamidine cyclo-ligase"/>
    <property type="match status" value="1"/>
</dbReference>
<dbReference type="FunFam" id="3.90.650.10:FF:000001">
    <property type="entry name" value="Phosphoribosylformylglycinamidine cyclo-ligase"/>
    <property type="match status" value="1"/>
</dbReference>
<dbReference type="Gene3D" id="3.90.650.10">
    <property type="entry name" value="PurM-like C-terminal domain"/>
    <property type="match status" value="1"/>
</dbReference>
<dbReference type="Gene3D" id="3.30.1330.10">
    <property type="entry name" value="PurM-like, N-terminal domain"/>
    <property type="match status" value="1"/>
</dbReference>
<dbReference type="HAMAP" id="MF_00741">
    <property type="entry name" value="AIRS"/>
    <property type="match status" value="1"/>
</dbReference>
<dbReference type="InterPro" id="IPR010918">
    <property type="entry name" value="PurM-like_C_dom"/>
</dbReference>
<dbReference type="InterPro" id="IPR036676">
    <property type="entry name" value="PurM-like_C_sf"/>
</dbReference>
<dbReference type="InterPro" id="IPR016188">
    <property type="entry name" value="PurM-like_N"/>
</dbReference>
<dbReference type="InterPro" id="IPR036921">
    <property type="entry name" value="PurM-like_N_sf"/>
</dbReference>
<dbReference type="InterPro" id="IPR004733">
    <property type="entry name" value="PurM_cligase"/>
</dbReference>
<dbReference type="NCBIfam" id="TIGR00878">
    <property type="entry name" value="purM"/>
    <property type="match status" value="1"/>
</dbReference>
<dbReference type="PANTHER" id="PTHR10520:SF12">
    <property type="entry name" value="TRIFUNCTIONAL PURINE BIOSYNTHETIC PROTEIN ADENOSINE-3"/>
    <property type="match status" value="1"/>
</dbReference>
<dbReference type="PANTHER" id="PTHR10520">
    <property type="entry name" value="TRIFUNCTIONAL PURINE BIOSYNTHETIC PROTEIN ADENOSINE-3-RELATED"/>
    <property type="match status" value="1"/>
</dbReference>
<dbReference type="Pfam" id="PF00586">
    <property type="entry name" value="AIRS"/>
    <property type="match status" value="1"/>
</dbReference>
<dbReference type="Pfam" id="PF02769">
    <property type="entry name" value="AIRS_C"/>
    <property type="match status" value="1"/>
</dbReference>
<dbReference type="SUPFAM" id="SSF56042">
    <property type="entry name" value="PurM C-terminal domain-like"/>
    <property type="match status" value="1"/>
</dbReference>
<dbReference type="SUPFAM" id="SSF55326">
    <property type="entry name" value="PurM N-terminal domain-like"/>
    <property type="match status" value="1"/>
</dbReference>
<organism>
    <name type="scientific">Bifidobacterium longum subsp. infantis (strain ATCC 15697 / DSM 20088 / JCM 1222 / NCTC 11817 / S12)</name>
    <dbReference type="NCBI Taxonomy" id="391904"/>
    <lineage>
        <taxon>Bacteria</taxon>
        <taxon>Bacillati</taxon>
        <taxon>Actinomycetota</taxon>
        <taxon>Actinomycetes</taxon>
        <taxon>Bifidobacteriales</taxon>
        <taxon>Bifidobacteriaceae</taxon>
        <taxon>Bifidobacterium</taxon>
    </lineage>
</organism>
<proteinExistence type="inferred from homology"/>
<gene>
    <name evidence="1" type="primary">purM</name>
    <name type="ordered locus">Blon_1959</name>
    <name type="ordered locus">BLIJ_2031</name>
</gene>
<keyword id="KW-0067">ATP-binding</keyword>
<keyword id="KW-0963">Cytoplasm</keyword>
<keyword id="KW-0436">Ligase</keyword>
<keyword id="KW-0547">Nucleotide-binding</keyword>
<keyword id="KW-0658">Purine biosynthesis</keyword>
<protein>
    <recommendedName>
        <fullName evidence="1">Phosphoribosylformylglycinamidine cyclo-ligase</fullName>
        <ecNumber evidence="1">6.3.3.1</ecNumber>
    </recommendedName>
    <alternativeName>
        <fullName evidence="1">AIR synthase</fullName>
    </alternativeName>
    <alternativeName>
        <fullName evidence="1">AIRS</fullName>
    </alternativeName>
    <alternativeName>
        <fullName evidence="1">Phosphoribosyl-aminoimidazole synthetase</fullName>
    </alternativeName>
</protein>
<evidence type="ECO:0000255" key="1">
    <source>
        <dbReference type="HAMAP-Rule" id="MF_00741"/>
    </source>
</evidence>
<reference key="1">
    <citation type="journal article" date="2008" name="Proc. Natl. Acad. Sci. U.S.A.">
        <title>The genome sequence of Bifidobacterium longum subsp. infantis reveals adaptations for milk utilization within the infant microbiome.</title>
        <authorList>
            <person name="Sela D.A."/>
            <person name="Chapman J."/>
            <person name="Adeuya A."/>
            <person name="Kim J.H."/>
            <person name="Chen F."/>
            <person name="Whitehead T.R."/>
            <person name="Lapidus A."/>
            <person name="Rokhsar D.S."/>
            <person name="Lebrilla C.B."/>
            <person name="German J.B."/>
            <person name="Price N.P."/>
            <person name="Richardson P.M."/>
            <person name="Mills D.A."/>
        </authorList>
    </citation>
    <scope>NUCLEOTIDE SEQUENCE [LARGE SCALE GENOMIC DNA]</scope>
    <source>
        <strain>ATCC 15697 / DSM 20088 / JCM 1222 / NCTC 11817 / S12</strain>
    </source>
</reference>
<reference key="2">
    <citation type="journal article" date="2011" name="Nature">
        <title>Bifidobacteria can protect from enteropathogenic infection through production of acetate.</title>
        <authorList>
            <person name="Fukuda S."/>
            <person name="Toh H."/>
            <person name="Hase K."/>
            <person name="Oshima K."/>
            <person name="Nakanishi Y."/>
            <person name="Yoshimura K."/>
            <person name="Tobe T."/>
            <person name="Clarke J.M."/>
            <person name="Topping D.L."/>
            <person name="Suzuki T."/>
            <person name="Taylor T.D."/>
            <person name="Itoh K."/>
            <person name="Kikuchi J."/>
            <person name="Morita H."/>
            <person name="Hattori M."/>
            <person name="Ohno H."/>
        </authorList>
    </citation>
    <scope>NUCLEOTIDE SEQUENCE [LARGE SCALE GENOMIC DNA]</scope>
    <source>
        <strain>ATCC 15697 / DSM 20088 / JCM 1222 / NCTC 11817 / S12</strain>
    </source>
</reference>
<accession>B7GU81</accession>
<accession>E8MM32</accession>